<evidence type="ECO:0000250" key="1"/>
<evidence type="ECO:0000256" key="2">
    <source>
        <dbReference type="SAM" id="MobiDB-lite"/>
    </source>
</evidence>
<evidence type="ECO:0000305" key="3"/>
<proteinExistence type="inferred from homology"/>
<comment type="function">
    <text>Core component of nucleosome. Nucleosomes wrap and compact DNA into chromatin, limiting DNA accessibility to the cellular machineries which require DNA as a template. Histones thereby play a central role in transcription regulation, DNA repair, DNA replication and chromosomal stability. DNA accessibility is regulated via a complex set of post-translational modifications of histones, also called histone code, and nucleosome remodeling.</text>
</comment>
<comment type="subunit">
    <text>The nucleosome is a histone octamer containing two molecules each of H2A, H2B, H3 and H4 assembled in one H3-H4 heterotetramer and two H2A-H2B heterodimers. The octamer wraps approximately 147 bp of DNA.</text>
</comment>
<comment type="subcellular location">
    <subcellularLocation>
        <location evidence="1">Nucleus</location>
    </subcellularLocation>
    <subcellularLocation>
        <location evidence="1">Chromosome</location>
    </subcellularLocation>
</comment>
<comment type="domain">
    <text>Contains one SPKK motif which may interact with the minor groove of A/T-rich DNA sites. Phosphorylation of this motif may regulate DNA binding. This motif is reiterated in both termini of histone H1 and in the N-terminus of sea urchin histones H2B, but its presence in the C-terminus seems to be unique to plant H2A.</text>
</comment>
<comment type="similarity">
    <text evidence="3">Belongs to the histone H2A family.</text>
</comment>
<protein>
    <recommendedName>
        <fullName>Probable histone H2A.3</fullName>
    </recommendedName>
</protein>
<reference key="1">
    <citation type="submission" date="2006-04" db="EMBL/GenBank/DDBJ databases">
        <authorList>
            <consortium name="The international Medicago genome annotation group"/>
        </authorList>
    </citation>
    <scope>NUCLEOTIDE SEQUENCE [LARGE SCALE GENOMIC DNA]</scope>
</reference>
<organism>
    <name type="scientific">Medicago truncatula</name>
    <name type="common">Barrel medic</name>
    <name type="synonym">Medicago tribuloides</name>
    <dbReference type="NCBI Taxonomy" id="3880"/>
    <lineage>
        <taxon>Eukaryota</taxon>
        <taxon>Viridiplantae</taxon>
        <taxon>Streptophyta</taxon>
        <taxon>Embryophyta</taxon>
        <taxon>Tracheophyta</taxon>
        <taxon>Spermatophyta</taxon>
        <taxon>Magnoliopsida</taxon>
        <taxon>eudicotyledons</taxon>
        <taxon>Gunneridae</taxon>
        <taxon>Pentapetalae</taxon>
        <taxon>rosids</taxon>
        <taxon>fabids</taxon>
        <taxon>Fabales</taxon>
        <taxon>Fabaceae</taxon>
        <taxon>Papilionoideae</taxon>
        <taxon>50 kb inversion clade</taxon>
        <taxon>NPAAA clade</taxon>
        <taxon>Hologalegina</taxon>
        <taxon>IRL clade</taxon>
        <taxon>Trifolieae</taxon>
        <taxon>Medicago</taxon>
    </lineage>
</organism>
<sequence>MDASTKTTKKGAGGRKGGGPRKKSVTRSIRAGLQFPVGRIGRYLKKGRYAQRVGTGAPVYLAAVLEYLAAEVLELAGNAARDNKKNRIIPRHLLLAVRNDEELGKLLAGVTIAHGGVLPNINPILLPKKTERANTGGKEPKTTKAGKSPKKA</sequence>
<dbReference type="EMBL" id="AC149637">
    <property type="status" value="NOT_ANNOTATED_CDS"/>
    <property type="molecule type" value="Genomic_DNA"/>
</dbReference>
<dbReference type="EMBL" id="AC146745">
    <property type="status" value="NOT_ANNOTATED_CDS"/>
    <property type="molecule type" value="Genomic_DNA"/>
</dbReference>
<dbReference type="RefSeq" id="NP_001411852.1">
    <property type="nucleotide sequence ID" value="NM_001424923.1"/>
</dbReference>
<dbReference type="RefSeq" id="XP_003607007.1">
    <property type="nucleotide sequence ID" value="XM_003606959.2"/>
</dbReference>
<dbReference type="SMR" id="Q1S053"/>
<dbReference type="PaxDb" id="3880-AES89204"/>
<dbReference type="ProMEX" id="Q1S053"/>
<dbReference type="EnsemblPlants" id="rna23799">
    <property type="protein sequence ID" value="RHN61344.1"/>
    <property type="gene ID" value="gene23799"/>
</dbReference>
<dbReference type="GeneID" id="11438704"/>
<dbReference type="Gramene" id="rna23799">
    <property type="protein sequence ID" value="RHN61344.1"/>
    <property type="gene ID" value="gene23799"/>
</dbReference>
<dbReference type="KEGG" id="mtr:11438704"/>
<dbReference type="eggNOG" id="KOG1756">
    <property type="taxonomic scope" value="Eukaryota"/>
</dbReference>
<dbReference type="HOGENOM" id="CLU_062828_1_1_1"/>
<dbReference type="OMA" id="TASRRCK"/>
<dbReference type="OrthoDB" id="9421954at2759"/>
<dbReference type="ExpressionAtlas" id="Q1S053">
    <property type="expression patterns" value="differential"/>
</dbReference>
<dbReference type="GO" id="GO:0000786">
    <property type="term" value="C:nucleosome"/>
    <property type="evidence" value="ECO:0007669"/>
    <property type="project" value="UniProtKB-KW"/>
</dbReference>
<dbReference type="GO" id="GO:0005634">
    <property type="term" value="C:nucleus"/>
    <property type="evidence" value="ECO:0007669"/>
    <property type="project" value="UniProtKB-SubCell"/>
</dbReference>
<dbReference type="GO" id="GO:0003677">
    <property type="term" value="F:DNA binding"/>
    <property type="evidence" value="ECO:0007669"/>
    <property type="project" value="UniProtKB-KW"/>
</dbReference>
<dbReference type="GO" id="GO:0046982">
    <property type="term" value="F:protein heterodimerization activity"/>
    <property type="evidence" value="ECO:0007669"/>
    <property type="project" value="InterPro"/>
</dbReference>
<dbReference type="GO" id="GO:0030527">
    <property type="term" value="F:structural constituent of chromatin"/>
    <property type="evidence" value="ECO:0007669"/>
    <property type="project" value="InterPro"/>
</dbReference>
<dbReference type="CDD" id="cd00074">
    <property type="entry name" value="HFD_H2A"/>
    <property type="match status" value="1"/>
</dbReference>
<dbReference type="FunFam" id="1.10.20.10:FF:000026">
    <property type="entry name" value="Histone H2A"/>
    <property type="match status" value="1"/>
</dbReference>
<dbReference type="Gene3D" id="1.10.20.10">
    <property type="entry name" value="Histone, subunit A"/>
    <property type="match status" value="1"/>
</dbReference>
<dbReference type="InterPro" id="IPR009072">
    <property type="entry name" value="Histone-fold"/>
</dbReference>
<dbReference type="InterPro" id="IPR002119">
    <property type="entry name" value="Histone_H2A"/>
</dbReference>
<dbReference type="InterPro" id="IPR007125">
    <property type="entry name" value="Histone_H2A/H2B/H3"/>
</dbReference>
<dbReference type="InterPro" id="IPR032454">
    <property type="entry name" value="Histone_H2A_C"/>
</dbReference>
<dbReference type="InterPro" id="IPR032458">
    <property type="entry name" value="Histone_H2A_CS"/>
</dbReference>
<dbReference type="PANTHER" id="PTHR23430">
    <property type="entry name" value="HISTONE H2A"/>
    <property type="match status" value="1"/>
</dbReference>
<dbReference type="Pfam" id="PF00125">
    <property type="entry name" value="Histone"/>
    <property type="match status" value="1"/>
</dbReference>
<dbReference type="Pfam" id="PF16211">
    <property type="entry name" value="Histone_H2A_C"/>
    <property type="match status" value="1"/>
</dbReference>
<dbReference type="PRINTS" id="PR00620">
    <property type="entry name" value="HISTONEH2A"/>
</dbReference>
<dbReference type="SMART" id="SM00414">
    <property type="entry name" value="H2A"/>
    <property type="match status" value="1"/>
</dbReference>
<dbReference type="SUPFAM" id="SSF47113">
    <property type="entry name" value="Histone-fold"/>
    <property type="match status" value="1"/>
</dbReference>
<dbReference type="PROSITE" id="PS00046">
    <property type="entry name" value="HISTONE_H2A"/>
    <property type="match status" value="1"/>
</dbReference>
<accession>Q1S053</accession>
<feature type="chain" id="PRO_0000239994" description="Probable histone H2A.3">
    <location>
        <begin position="1"/>
        <end position="152"/>
    </location>
</feature>
<feature type="region of interest" description="Disordered" evidence="2">
    <location>
        <begin position="1"/>
        <end position="25"/>
    </location>
</feature>
<feature type="region of interest" description="Disordered" evidence="2">
    <location>
        <begin position="129"/>
        <end position="152"/>
    </location>
</feature>
<feature type="short sequence motif" description="SPKK motif">
    <location>
        <begin position="148"/>
        <end position="151"/>
    </location>
</feature>
<feature type="compositionally biased region" description="Basic residues" evidence="2">
    <location>
        <begin position="7"/>
        <end position="25"/>
    </location>
</feature>
<feature type="compositionally biased region" description="Basic and acidic residues" evidence="2">
    <location>
        <begin position="129"/>
        <end position="142"/>
    </location>
</feature>
<name>H2A3_MEDTR</name>
<keyword id="KW-0158">Chromosome</keyword>
<keyword id="KW-0238">DNA-binding</keyword>
<keyword id="KW-0544">Nucleosome core</keyword>
<keyword id="KW-0539">Nucleus</keyword>